<name>Y2267_ACIBT</name>
<sequence>MLALISPAKTLDYETALPTDEFTQPRLLENSAQLIDVCRKLSASEIANLMSVSEKIATLNADRFRDWKPEFDFSNARQAIYAFKGDVYTGLDAYHLKDKDIDFAQQHLRMLSGLYGLLRPLDLMMPYRLEMGTKLKNTRGHNLYEFWDDIITNQINEDLAAIKSELLVNLASDEYYKSVNEKKIKAEIVKPVFLDQKNSKYKVISFYAKKARGLMARFIIENQLNKAEDLKAFNTEGYYFDADNSSAKELVFKRDEQ</sequence>
<protein>
    <recommendedName>
        <fullName evidence="1">UPF0246 protein A1S_2267</fullName>
    </recommendedName>
</protein>
<gene>
    <name type="ordered locus">A1S_2267</name>
</gene>
<proteinExistence type="inferred from homology"/>
<comment type="similarity">
    <text evidence="1">Belongs to the UPF0246 family.</text>
</comment>
<dbReference type="EMBL" id="CP000521">
    <property type="protein sequence ID" value="ABO12690.2"/>
    <property type="molecule type" value="Genomic_DNA"/>
</dbReference>
<dbReference type="SMR" id="A3M6Z6"/>
<dbReference type="KEGG" id="acb:A1S_2267"/>
<dbReference type="HOGENOM" id="CLU_061989_0_0_6"/>
<dbReference type="GO" id="GO:0005829">
    <property type="term" value="C:cytosol"/>
    <property type="evidence" value="ECO:0007669"/>
    <property type="project" value="TreeGrafter"/>
</dbReference>
<dbReference type="GO" id="GO:0033194">
    <property type="term" value="P:response to hydroperoxide"/>
    <property type="evidence" value="ECO:0007669"/>
    <property type="project" value="TreeGrafter"/>
</dbReference>
<dbReference type="HAMAP" id="MF_00652">
    <property type="entry name" value="UPF0246"/>
    <property type="match status" value="1"/>
</dbReference>
<dbReference type="InterPro" id="IPR005583">
    <property type="entry name" value="YaaA"/>
</dbReference>
<dbReference type="NCBIfam" id="NF002541">
    <property type="entry name" value="PRK02101.1-1"/>
    <property type="match status" value="1"/>
</dbReference>
<dbReference type="NCBIfam" id="NF002542">
    <property type="entry name" value="PRK02101.1-3"/>
    <property type="match status" value="1"/>
</dbReference>
<dbReference type="PANTHER" id="PTHR30283:SF4">
    <property type="entry name" value="PEROXIDE STRESS RESISTANCE PROTEIN YAAA"/>
    <property type="match status" value="1"/>
</dbReference>
<dbReference type="PANTHER" id="PTHR30283">
    <property type="entry name" value="PEROXIDE STRESS RESPONSE PROTEIN YAAA"/>
    <property type="match status" value="1"/>
</dbReference>
<dbReference type="Pfam" id="PF03883">
    <property type="entry name" value="H2O2_YaaD"/>
    <property type="match status" value="1"/>
</dbReference>
<feature type="chain" id="PRO_1000131095" description="UPF0246 protein A1S_2267">
    <location>
        <begin position="1"/>
        <end position="257"/>
    </location>
</feature>
<accession>A3M6Z6</accession>
<evidence type="ECO:0000255" key="1">
    <source>
        <dbReference type="HAMAP-Rule" id="MF_00652"/>
    </source>
</evidence>
<reference key="1">
    <citation type="journal article" date="2007" name="Genes Dev.">
        <title>New insights into Acinetobacter baumannii pathogenesis revealed by high-density pyrosequencing and transposon mutagenesis.</title>
        <authorList>
            <person name="Smith M.G."/>
            <person name="Gianoulis T.A."/>
            <person name="Pukatzki S."/>
            <person name="Mekalanos J.J."/>
            <person name="Ornston L.N."/>
            <person name="Gerstein M."/>
            <person name="Snyder M."/>
        </authorList>
    </citation>
    <scope>NUCLEOTIDE SEQUENCE [LARGE SCALE GENOMIC DNA]</scope>
    <source>
        <strain>ATCC 17978 / DSM 105126 / CIP 53.77 / LMG 1025 / NCDC KC755 / 5377</strain>
    </source>
</reference>
<organism>
    <name type="scientific">Acinetobacter baumannii (strain ATCC 17978 / DSM 105126 / CIP 53.77 / LMG 1025 / NCDC KC755 / 5377)</name>
    <dbReference type="NCBI Taxonomy" id="400667"/>
    <lineage>
        <taxon>Bacteria</taxon>
        <taxon>Pseudomonadati</taxon>
        <taxon>Pseudomonadota</taxon>
        <taxon>Gammaproteobacteria</taxon>
        <taxon>Moraxellales</taxon>
        <taxon>Moraxellaceae</taxon>
        <taxon>Acinetobacter</taxon>
        <taxon>Acinetobacter calcoaceticus/baumannii complex</taxon>
    </lineage>
</organism>